<keyword id="KW-0249">Electron transport</keyword>
<keyword id="KW-0349">Heme</keyword>
<keyword id="KW-0408">Iron</keyword>
<keyword id="KW-0472">Membrane</keyword>
<keyword id="KW-0479">Metal-binding</keyword>
<keyword id="KW-0496">Mitochondrion</keyword>
<keyword id="KW-0999">Mitochondrion inner membrane</keyword>
<keyword id="KW-0679">Respiratory chain</keyword>
<keyword id="KW-0812">Transmembrane</keyword>
<keyword id="KW-1133">Transmembrane helix</keyword>
<keyword id="KW-0813">Transport</keyword>
<keyword id="KW-0830">Ubiquinone</keyword>
<feature type="chain" id="PRO_0000061073" description="Cytochrome b">
    <location>
        <begin position="1"/>
        <end position="379"/>
    </location>
</feature>
<feature type="transmembrane region" description="Helical" evidence="2">
    <location>
        <begin position="33"/>
        <end position="53"/>
    </location>
</feature>
<feature type="transmembrane region" description="Helical" evidence="2">
    <location>
        <begin position="77"/>
        <end position="98"/>
    </location>
</feature>
<feature type="transmembrane region" description="Helical" evidence="2">
    <location>
        <begin position="113"/>
        <end position="133"/>
    </location>
</feature>
<feature type="transmembrane region" description="Helical" evidence="2">
    <location>
        <begin position="178"/>
        <end position="198"/>
    </location>
</feature>
<feature type="transmembrane region" description="Helical" evidence="2">
    <location>
        <begin position="226"/>
        <end position="246"/>
    </location>
</feature>
<feature type="transmembrane region" description="Helical" evidence="2">
    <location>
        <begin position="288"/>
        <end position="308"/>
    </location>
</feature>
<feature type="transmembrane region" description="Helical" evidence="2">
    <location>
        <begin position="320"/>
        <end position="340"/>
    </location>
</feature>
<feature type="transmembrane region" description="Helical" evidence="2">
    <location>
        <begin position="347"/>
        <end position="367"/>
    </location>
</feature>
<feature type="binding site" description="axial binding residue" evidence="2">
    <location>
        <position position="83"/>
    </location>
    <ligand>
        <name>heme b</name>
        <dbReference type="ChEBI" id="CHEBI:60344"/>
        <label>b562</label>
    </ligand>
    <ligandPart>
        <name>Fe</name>
        <dbReference type="ChEBI" id="CHEBI:18248"/>
    </ligandPart>
</feature>
<feature type="binding site" description="axial binding residue" evidence="2">
    <location>
        <position position="97"/>
    </location>
    <ligand>
        <name>heme b</name>
        <dbReference type="ChEBI" id="CHEBI:60344"/>
        <label>b566</label>
    </ligand>
    <ligandPart>
        <name>Fe</name>
        <dbReference type="ChEBI" id="CHEBI:18248"/>
    </ligandPart>
</feature>
<feature type="binding site" description="axial binding residue" evidence="2">
    <location>
        <position position="182"/>
    </location>
    <ligand>
        <name>heme b</name>
        <dbReference type="ChEBI" id="CHEBI:60344"/>
        <label>b562</label>
    </ligand>
    <ligandPart>
        <name>Fe</name>
        <dbReference type="ChEBI" id="CHEBI:18248"/>
    </ligandPart>
</feature>
<feature type="binding site" description="axial binding residue" evidence="2">
    <location>
        <position position="196"/>
    </location>
    <ligand>
        <name>heme b</name>
        <dbReference type="ChEBI" id="CHEBI:60344"/>
        <label>b566</label>
    </ligand>
    <ligandPart>
        <name>Fe</name>
        <dbReference type="ChEBI" id="CHEBI:18248"/>
    </ligandPart>
</feature>
<feature type="binding site" evidence="2">
    <location>
        <position position="201"/>
    </location>
    <ligand>
        <name>a ubiquinone</name>
        <dbReference type="ChEBI" id="CHEBI:16389"/>
    </ligand>
</feature>
<organism>
    <name type="scientific">Kobus megaceros</name>
    <name type="common">Nile lechwe</name>
    <dbReference type="NCBI Taxonomy" id="59532"/>
    <lineage>
        <taxon>Eukaryota</taxon>
        <taxon>Metazoa</taxon>
        <taxon>Chordata</taxon>
        <taxon>Craniata</taxon>
        <taxon>Vertebrata</taxon>
        <taxon>Euteleostomi</taxon>
        <taxon>Mammalia</taxon>
        <taxon>Eutheria</taxon>
        <taxon>Laurasiatheria</taxon>
        <taxon>Artiodactyla</taxon>
        <taxon>Ruminantia</taxon>
        <taxon>Pecora</taxon>
        <taxon>Bovidae</taxon>
        <taxon>Reduncinae</taxon>
        <taxon>Kobus</taxon>
    </lineage>
</organism>
<sequence length="379" mass="42813">MTNMRKTHPLMKIVNNAFIDLPAPSNISSWWNFGSLLGICLILQILTGLFLAMHYTSDTTTAFSSVTHICRDVNYGWIIRYMHANGASMFFICLFMHVGRGLYYGSYIFLETWNIGVILLFTTMATAFMGYVLPWGQMSFWGATVITNLLSAIPYIGTNLVEWIWGGFSVDKATLTRFFAFHFILPFIIAAIAMVHLLFLHETGSNNPTGISSDTDKIPFHPYYTIKDILGALLLILMLMLLVLFAPDLLGDPDNYTPANPLNTPPHIKPEWYFLFAYAILRSIPNKLGGVLALILSILILVLMPLLHTSKQRSMMFRPISQCLFWILVADLLTLTWIGGQPVEHPYIIIGQLASIMYFLLILVLMPTASTIENNLLKW</sequence>
<dbReference type="EMBL" id="AJ222686">
    <property type="protein sequence ID" value="CAA10941.1"/>
    <property type="molecule type" value="Genomic_DNA"/>
</dbReference>
<dbReference type="EMBL" id="AF096620">
    <property type="protein sequence ID" value="AAD27792.1"/>
    <property type="molecule type" value="Genomic_DNA"/>
</dbReference>
<dbReference type="SMR" id="O79360"/>
<dbReference type="GO" id="GO:0005743">
    <property type="term" value="C:mitochondrial inner membrane"/>
    <property type="evidence" value="ECO:0007669"/>
    <property type="project" value="UniProtKB-SubCell"/>
</dbReference>
<dbReference type="GO" id="GO:0045275">
    <property type="term" value="C:respiratory chain complex III"/>
    <property type="evidence" value="ECO:0007669"/>
    <property type="project" value="InterPro"/>
</dbReference>
<dbReference type="GO" id="GO:0046872">
    <property type="term" value="F:metal ion binding"/>
    <property type="evidence" value="ECO:0007669"/>
    <property type="project" value="UniProtKB-KW"/>
</dbReference>
<dbReference type="GO" id="GO:0008121">
    <property type="term" value="F:ubiquinol-cytochrome-c reductase activity"/>
    <property type="evidence" value="ECO:0007669"/>
    <property type="project" value="InterPro"/>
</dbReference>
<dbReference type="GO" id="GO:0006122">
    <property type="term" value="P:mitochondrial electron transport, ubiquinol to cytochrome c"/>
    <property type="evidence" value="ECO:0007669"/>
    <property type="project" value="TreeGrafter"/>
</dbReference>
<dbReference type="CDD" id="cd00290">
    <property type="entry name" value="cytochrome_b_C"/>
    <property type="match status" value="1"/>
</dbReference>
<dbReference type="CDD" id="cd00284">
    <property type="entry name" value="Cytochrome_b_N"/>
    <property type="match status" value="1"/>
</dbReference>
<dbReference type="FunFam" id="1.20.810.10:FF:000002">
    <property type="entry name" value="Cytochrome b"/>
    <property type="match status" value="1"/>
</dbReference>
<dbReference type="Gene3D" id="1.20.810.10">
    <property type="entry name" value="Cytochrome Bc1 Complex, Chain C"/>
    <property type="match status" value="1"/>
</dbReference>
<dbReference type="InterPro" id="IPR005798">
    <property type="entry name" value="Cyt_b/b6_C"/>
</dbReference>
<dbReference type="InterPro" id="IPR036150">
    <property type="entry name" value="Cyt_b/b6_C_sf"/>
</dbReference>
<dbReference type="InterPro" id="IPR005797">
    <property type="entry name" value="Cyt_b/b6_N"/>
</dbReference>
<dbReference type="InterPro" id="IPR027387">
    <property type="entry name" value="Cytb/b6-like_sf"/>
</dbReference>
<dbReference type="InterPro" id="IPR030689">
    <property type="entry name" value="Cytochrome_b"/>
</dbReference>
<dbReference type="InterPro" id="IPR048260">
    <property type="entry name" value="Cytochrome_b_C_euk/bac"/>
</dbReference>
<dbReference type="InterPro" id="IPR048259">
    <property type="entry name" value="Cytochrome_b_N_euk/bac"/>
</dbReference>
<dbReference type="InterPro" id="IPR016174">
    <property type="entry name" value="Di-haem_cyt_TM"/>
</dbReference>
<dbReference type="PANTHER" id="PTHR19271">
    <property type="entry name" value="CYTOCHROME B"/>
    <property type="match status" value="1"/>
</dbReference>
<dbReference type="PANTHER" id="PTHR19271:SF16">
    <property type="entry name" value="CYTOCHROME B"/>
    <property type="match status" value="1"/>
</dbReference>
<dbReference type="Pfam" id="PF00032">
    <property type="entry name" value="Cytochrom_B_C"/>
    <property type="match status" value="1"/>
</dbReference>
<dbReference type="Pfam" id="PF00033">
    <property type="entry name" value="Cytochrome_B"/>
    <property type="match status" value="1"/>
</dbReference>
<dbReference type="PIRSF" id="PIRSF038885">
    <property type="entry name" value="COB"/>
    <property type="match status" value="1"/>
</dbReference>
<dbReference type="SUPFAM" id="SSF81648">
    <property type="entry name" value="a domain/subunit of cytochrome bc1 complex (Ubiquinol-cytochrome c reductase)"/>
    <property type="match status" value="1"/>
</dbReference>
<dbReference type="SUPFAM" id="SSF81342">
    <property type="entry name" value="Transmembrane di-heme cytochromes"/>
    <property type="match status" value="1"/>
</dbReference>
<dbReference type="PROSITE" id="PS51003">
    <property type="entry name" value="CYTB_CTER"/>
    <property type="match status" value="1"/>
</dbReference>
<dbReference type="PROSITE" id="PS51002">
    <property type="entry name" value="CYTB_NTER"/>
    <property type="match status" value="1"/>
</dbReference>
<protein>
    <recommendedName>
        <fullName>Cytochrome b</fullName>
    </recommendedName>
    <alternativeName>
        <fullName>Complex III subunit 3</fullName>
    </alternativeName>
    <alternativeName>
        <fullName>Complex III subunit III</fullName>
    </alternativeName>
    <alternativeName>
        <fullName>Cytochrome b-c1 complex subunit 3</fullName>
    </alternativeName>
    <alternativeName>
        <fullName>Ubiquinol-cytochrome-c reductase complex cytochrome b subunit</fullName>
    </alternativeName>
</protein>
<evidence type="ECO:0000250" key="1"/>
<evidence type="ECO:0000250" key="2">
    <source>
        <dbReference type="UniProtKB" id="P00157"/>
    </source>
</evidence>
<evidence type="ECO:0000255" key="3">
    <source>
        <dbReference type="PROSITE-ProRule" id="PRU00967"/>
    </source>
</evidence>
<evidence type="ECO:0000255" key="4">
    <source>
        <dbReference type="PROSITE-ProRule" id="PRU00968"/>
    </source>
</evidence>
<geneLocation type="mitochondrion"/>
<comment type="function">
    <text evidence="2">Component of the ubiquinol-cytochrome c reductase complex (complex III or cytochrome b-c1 complex) that is part of the mitochondrial respiratory chain. The b-c1 complex mediates electron transfer from ubiquinol to cytochrome c. Contributes to the generation of a proton gradient across the mitochondrial membrane that is then used for ATP synthesis.</text>
</comment>
<comment type="cofactor">
    <cofactor evidence="2">
        <name>heme b</name>
        <dbReference type="ChEBI" id="CHEBI:60344"/>
    </cofactor>
    <text evidence="2">Binds 2 heme b groups non-covalently.</text>
</comment>
<comment type="subunit">
    <text evidence="2">The cytochrome bc1 complex contains 11 subunits: 3 respiratory subunits (MT-CYB, CYC1 and UQCRFS1), 2 core proteins (UQCRC1 and UQCRC2) and 6 low-molecular weight proteins (UQCRH/QCR6, UQCRB/QCR7, UQCRQ/QCR8, UQCR10/QCR9, UQCR11/QCR10 and a cleavage product of UQCRFS1). This cytochrome bc1 complex then forms a dimer.</text>
</comment>
<comment type="subcellular location">
    <subcellularLocation>
        <location evidence="2">Mitochondrion inner membrane</location>
        <topology evidence="2">Multi-pass membrane protein</topology>
    </subcellularLocation>
</comment>
<comment type="miscellaneous">
    <text evidence="1">Heme 1 (or BL or b562) is low-potential and absorbs at about 562 nm, and heme 2 (or BH or b566) is high-potential and absorbs at about 566 nm.</text>
</comment>
<comment type="similarity">
    <text evidence="3 4">Belongs to the cytochrome b family.</text>
</comment>
<comment type="caution">
    <text evidence="2">The full-length protein contains only eight transmembrane helices, not nine as predicted by bioinformatics tools.</text>
</comment>
<reference key="1">
    <citation type="journal article" date="1999" name="Mol. Phylogenet. Evol.">
        <title>The tribal radiation of the family Bovidae (Artiodactyla) and the evolution of the mitochondrial cytochrome b gene.</title>
        <authorList>
            <person name="Hassanin A."/>
            <person name="Douzery E.J.P."/>
        </authorList>
    </citation>
    <scope>NUCLEOTIDE SEQUENCE [GENOMIC DNA]</scope>
</reference>
<reference key="2">
    <citation type="journal article" date="2001" name="J. Mammal. Evol.">
        <title>Molecular systematics and phylogenetics of the reduncini (Artiodactyla: Bovidae) inferred from the analysis of mitochondrial cytochrome b gene sequences.</title>
        <authorList>
            <person name="Birungi J."/>
            <person name="Arctander P."/>
        </authorList>
    </citation>
    <scope>NUCLEOTIDE SEQUENCE [GENOMIC DNA]</scope>
</reference>
<accession>O79360</accession>
<proteinExistence type="inferred from homology"/>
<gene>
    <name type="primary">MT-CYB</name>
    <name type="synonym">COB</name>
    <name type="synonym">CYTB</name>
    <name type="synonym">MTCYB</name>
</gene>
<name>CYB_KOBME</name>